<gene>
    <name evidence="1" type="primary">rsmG</name>
    <name type="ordered locus">Mchl_1863</name>
</gene>
<organism>
    <name type="scientific">Methylorubrum extorquens (strain CM4 / NCIMB 13688)</name>
    <name type="common">Methylobacterium extorquens</name>
    <dbReference type="NCBI Taxonomy" id="440085"/>
    <lineage>
        <taxon>Bacteria</taxon>
        <taxon>Pseudomonadati</taxon>
        <taxon>Pseudomonadota</taxon>
        <taxon>Alphaproteobacteria</taxon>
        <taxon>Hyphomicrobiales</taxon>
        <taxon>Methylobacteriaceae</taxon>
        <taxon>Methylorubrum</taxon>
    </lineage>
</organism>
<feature type="chain" id="PRO_1000118193" description="Ribosomal RNA small subunit methyltransferase G">
    <location>
        <begin position="1"/>
        <end position="211"/>
    </location>
</feature>
<feature type="binding site" evidence="1">
    <location>
        <position position="73"/>
    </location>
    <ligand>
        <name>S-adenosyl-L-methionine</name>
        <dbReference type="ChEBI" id="CHEBI:59789"/>
    </ligand>
</feature>
<feature type="binding site" evidence="1">
    <location>
        <begin position="126"/>
        <end position="127"/>
    </location>
    <ligand>
        <name>S-adenosyl-L-methionine</name>
        <dbReference type="ChEBI" id="CHEBI:59789"/>
    </ligand>
</feature>
<feature type="binding site" evidence="1">
    <location>
        <position position="142"/>
    </location>
    <ligand>
        <name>S-adenosyl-L-methionine</name>
        <dbReference type="ChEBI" id="CHEBI:59789"/>
    </ligand>
</feature>
<proteinExistence type="inferred from homology"/>
<dbReference type="EC" id="2.1.1.170" evidence="1"/>
<dbReference type="EMBL" id="CP001298">
    <property type="protein sequence ID" value="ACK82726.1"/>
    <property type="molecule type" value="Genomic_DNA"/>
</dbReference>
<dbReference type="RefSeq" id="WP_003601463.1">
    <property type="nucleotide sequence ID" value="NC_011757.1"/>
</dbReference>
<dbReference type="SMR" id="B7KV55"/>
<dbReference type="KEGG" id="mch:Mchl_1863"/>
<dbReference type="HOGENOM" id="CLU_065341_1_0_5"/>
<dbReference type="Proteomes" id="UP000002385">
    <property type="component" value="Chromosome"/>
</dbReference>
<dbReference type="GO" id="GO:0005829">
    <property type="term" value="C:cytosol"/>
    <property type="evidence" value="ECO:0007669"/>
    <property type="project" value="TreeGrafter"/>
</dbReference>
<dbReference type="GO" id="GO:0070043">
    <property type="term" value="F:rRNA (guanine-N7-)-methyltransferase activity"/>
    <property type="evidence" value="ECO:0007669"/>
    <property type="project" value="UniProtKB-UniRule"/>
</dbReference>
<dbReference type="Gene3D" id="3.40.50.150">
    <property type="entry name" value="Vaccinia Virus protein VP39"/>
    <property type="match status" value="1"/>
</dbReference>
<dbReference type="HAMAP" id="MF_00074">
    <property type="entry name" value="16SrRNA_methyltr_G"/>
    <property type="match status" value="1"/>
</dbReference>
<dbReference type="InterPro" id="IPR003682">
    <property type="entry name" value="rRNA_ssu_MeTfrase_G"/>
</dbReference>
<dbReference type="InterPro" id="IPR029063">
    <property type="entry name" value="SAM-dependent_MTases_sf"/>
</dbReference>
<dbReference type="NCBIfam" id="TIGR00138">
    <property type="entry name" value="rsmG_gidB"/>
    <property type="match status" value="1"/>
</dbReference>
<dbReference type="PANTHER" id="PTHR31760">
    <property type="entry name" value="S-ADENOSYL-L-METHIONINE-DEPENDENT METHYLTRANSFERASES SUPERFAMILY PROTEIN"/>
    <property type="match status" value="1"/>
</dbReference>
<dbReference type="PANTHER" id="PTHR31760:SF0">
    <property type="entry name" value="S-ADENOSYL-L-METHIONINE-DEPENDENT METHYLTRANSFERASES SUPERFAMILY PROTEIN"/>
    <property type="match status" value="1"/>
</dbReference>
<dbReference type="Pfam" id="PF02527">
    <property type="entry name" value="GidB"/>
    <property type="match status" value="1"/>
</dbReference>
<dbReference type="PIRSF" id="PIRSF003078">
    <property type="entry name" value="GidB"/>
    <property type="match status" value="1"/>
</dbReference>
<dbReference type="SUPFAM" id="SSF53335">
    <property type="entry name" value="S-adenosyl-L-methionine-dependent methyltransferases"/>
    <property type="match status" value="1"/>
</dbReference>
<reference key="1">
    <citation type="submission" date="2008-12" db="EMBL/GenBank/DDBJ databases">
        <title>Complete sequence of chromosome of Methylobacterium chloromethanicum CM4.</title>
        <authorList>
            <consortium name="US DOE Joint Genome Institute"/>
            <person name="Lucas S."/>
            <person name="Copeland A."/>
            <person name="Lapidus A."/>
            <person name="Glavina del Rio T."/>
            <person name="Dalin E."/>
            <person name="Tice H."/>
            <person name="Bruce D."/>
            <person name="Goodwin L."/>
            <person name="Pitluck S."/>
            <person name="Chertkov O."/>
            <person name="Brettin T."/>
            <person name="Detter J.C."/>
            <person name="Han C."/>
            <person name="Larimer F."/>
            <person name="Land M."/>
            <person name="Hauser L."/>
            <person name="Kyrpides N."/>
            <person name="Mikhailova N."/>
            <person name="Marx C."/>
            <person name="Richardson P."/>
        </authorList>
    </citation>
    <scope>NUCLEOTIDE SEQUENCE [LARGE SCALE GENOMIC DNA]</scope>
    <source>
        <strain>CM4 / NCIMB 13688</strain>
    </source>
</reference>
<protein>
    <recommendedName>
        <fullName evidence="1">Ribosomal RNA small subunit methyltransferase G</fullName>
        <ecNumber evidence="1">2.1.1.170</ecNumber>
    </recommendedName>
    <alternativeName>
        <fullName evidence="1">16S rRNA 7-methylguanosine methyltransferase</fullName>
        <shortName evidence="1">16S rRNA m7G methyltransferase</shortName>
    </alternativeName>
</protein>
<name>RSMG_METC4</name>
<keyword id="KW-0963">Cytoplasm</keyword>
<keyword id="KW-0489">Methyltransferase</keyword>
<keyword id="KW-0698">rRNA processing</keyword>
<keyword id="KW-0949">S-adenosyl-L-methionine</keyword>
<keyword id="KW-0808">Transferase</keyword>
<sequence>MSTDLRTRVLSEHHVSRETAASLDLYVAQLTRWQTVKNLVGPATLKEVWHRHIADALQLLSIAPEATRWLDLGSGAGIPGLILALAGKERPGFHVRLVESNARKCAFLSETARLTGAPVTVHNARIEAVIGTLTDTEIVCARALAPLSQLLAWTEPLLTSGTTGLFPKGRDAATELTEAEDEWTFTRDLIPSRTDSQARIVRVTSLSRVDP</sequence>
<evidence type="ECO:0000255" key="1">
    <source>
        <dbReference type="HAMAP-Rule" id="MF_00074"/>
    </source>
</evidence>
<comment type="function">
    <text evidence="1">Specifically methylates the N7 position of guanine in position 527 of 16S rRNA.</text>
</comment>
<comment type="catalytic activity">
    <reaction evidence="1">
        <text>guanosine(527) in 16S rRNA + S-adenosyl-L-methionine = N(7)-methylguanosine(527) in 16S rRNA + S-adenosyl-L-homocysteine</text>
        <dbReference type="Rhea" id="RHEA:42732"/>
        <dbReference type="Rhea" id="RHEA-COMP:10209"/>
        <dbReference type="Rhea" id="RHEA-COMP:10210"/>
        <dbReference type="ChEBI" id="CHEBI:57856"/>
        <dbReference type="ChEBI" id="CHEBI:59789"/>
        <dbReference type="ChEBI" id="CHEBI:74269"/>
        <dbReference type="ChEBI" id="CHEBI:74480"/>
        <dbReference type="EC" id="2.1.1.170"/>
    </reaction>
</comment>
<comment type="subcellular location">
    <subcellularLocation>
        <location evidence="1">Cytoplasm</location>
    </subcellularLocation>
</comment>
<comment type="similarity">
    <text evidence="1">Belongs to the methyltransferase superfamily. RNA methyltransferase RsmG family.</text>
</comment>
<accession>B7KV55</accession>